<proteinExistence type="evidence at protein level"/>
<reference key="1">
    <citation type="journal article" date="1996" name="Yeast">
        <title>Identification of ACT4, a novel essential actin-related gene in the yeast Saccharomyces cerevisiae.</title>
        <authorList>
            <person name="Huang M.-E."/>
            <person name="Souciet J.-L."/>
            <person name="Chuat J.-C."/>
            <person name="Galibert F."/>
        </authorList>
    </citation>
    <scope>NUCLEOTIDE SEQUENCE [GENOMIC DNA]</scope>
    <source>
        <strain>ATCC 204508 / S288c</strain>
    </source>
</reference>
<reference key="2">
    <citation type="journal article" date="1996" name="Yeast">
        <title>Analysis of a 62 kb DNA sequence of chromosome X reveals 36 open reading frames and a gene cluster with a counterpart on chromosome XI.</title>
        <authorList>
            <person name="Huang M.-E."/>
            <person name="Manus V."/>
            <person name="Chuat J.-C."/>
            <person name="Galibert F."/>
        </authorList>
    </citation>
    <scope>NUCLEOTIDE SEQUENCE [GENOMIC DNA]</scope>
    <source>
        <strain>ATCC 204508 / S288c</strain>
    </source>
</reference>
<reference key="3">
    <citation type="journal article" date="1996" name="EMBO J.">
        <title>Complete nucleotide sequence of Saccharomyces cerevisiae chromosome X.</title>
        <authorList>
            <person name="Galibert F."/>
            <person name="Alexandraki D."/>
            <person name="Baur A."/>
            <person name="Boles E."/>
            <person name="Chalwatzis N."/>
            <person name="Chuat J.-C."/>
            <person name="Coster F."/>
            <person name="Cziepluch C."/>
            <person name="de Haan M."/>
            <person name="Domdey H."/>
            <person name="Durand P."/>
            <person name="Entian K.-D."/>
            <person name="Gatius M."/>
            <person name="Goffeau A."/>
            <person name="Grivell L.A."/>
            <person name="Hennemann A."/>
            <person name="Herbert C.J."/>
            <person name="Heumann K."/>
            <person name="Hilger F."/>
            <person name="Hollenberg C.P."/>
            <person name="Huang M.-E."/>
            <person name="Jacq C."/>
            <person name="Jauniaux J.-C."/>
            <person name="Katsoulou C."/>
            <person name="Kirchrath L."/>
            <person name="Kleine K."/>
            <person name="Kordes E."/>
            <person name="Koetter P."/>
            <person name="Liebl S."/>
            <person name="Louis E.J."/>
            <person name="Manus V."/>
            <person name="Mewes H.-W."/>
            <person name="Miosga T."/>
            <person name="Obermaier B."/>
            <person name="Perea J."/>
            <person name="Pohl T.M."/>
            <person name="Portetelle D."/>
            <person name="Pujol A."/>
            <person name="Purnelle B."/>
            <person name="Ramezani Rad M."/>
            <person name="Rasmussen S.W."/>
            <person name="Rose M."/>
            <person name="Rossau R."/>
            <person name="Schaaff-Gerstenschlaeger I."/>
            <person name="Smits P.H.M."/>
            <person name="Scarcez T."/>
            <person name="Soriano N."/>
            <person name="To Van D."/>
            <person name="Tzermia M."/>
            <person name="Van Broekhoven A."/>
            <person name="Vandenbol M."/>
            <person name="Wedler H."/>
            <person name="von Wettstein D."/>
            <person name="Wambutt R."/>
            <person name="Zagulski M."/>
            <person name="Zollner A."/>
            <person name="Karpfinger-Hartl L."/>
        </authorList>
    </citation>
    <scope>NUCLEOTIDE SEQUENCE [LARGE SCALE GENOMIC DNA]</scope>
    <source>
        <strain>ATCC 204508 / S288c</strain>
    </source>
</reference>
<reference key="4">
    <citation type="journal article" date="2014" name="G3 (Bethesda)">
        <title>The reference genome sequence of Saccharomyces cerevisiae: Then and now.</title>
        <authorList>
            <person name="Engel S.R."/>
            <person name="Dietrich F.S."/>
            <person name="Fisk D.G."/>
            <person name="Binkley G."/>
            <person name="Balakrishnan R."/>
            <person name="Costanzo M.C."/>
            <person name="Dwight S.S."/>
            <person name="Hitz B.C."/>
            <person name="Karra K."/>
            <person name="Nash R.S."/>
            <person name="Weng S."/>
            <person name="Wong E.D."/>
            <person name="Lloyd P."/>
            <person name="Skrzypek M.S."/>
            <person name="Miyasato S.R."/>
            <person name="Simison M."/>
            <person name="Cherry J.M."/>
        </authorList>
    </citation>
    <scope>GENOME REANNOTATION</scope>
    <source>
        <strain>ATCC 204508 / S288c</strain>
    </source>
</reference>
<reference key="5">
    <citation type="journal article" date="1997" name="Curr. Biol.">
        <title>The complex containing actin-related proteins Arp2 and Arp3 is required for the motility and integrity of yeast actin patches.</title>
        <authorList>
            <person name="Winter D."/>
            <person name="Podtelejnikov A.V."/>
            <person name="Mann M."/>
            <person name="Li R."/>
        </authorList>
    </citation>
    <scope>IDENTIFICATION IN THE ARP2/3 COMPLEX</scope>
    <scope>SUBCELLULAR LOCATION</scope>
</reference>
<reference key="6">
    <citation type="journal article" date="1997" name="Curr. Biol.">
        <authorList>
            <person name="Winter D."/>
            <person name="Podtelejnikov A.V."/>
            <person name="Mann M."/>
            <person name="Li R."/>
        </authorList>
    </citation>
    <scope>ERRATUM OF PUBMED:9210376</scope>
</reference>
<reference key="7">
    <citation type="journal article" date="2003" name="Nature">
        <title>Global analysis of protein expression in yeast.</title>
        <authorList>
            <person name="Ghaemmaghami S."/>
            <person name="Huh W.-K."/>
            <person name="Bower K."/>
            <person name="Howson R.W."/>
            <person name="Belle A."/>
            <person name="Dephoure N."/>
            <person name="O'Shea E.K."/>
            <person name="Weissman J.S."/>
        </authorList>
    </citation>
    <scope>LEVEL OF PROTEIN EXPRESSION [LARGE SCALE ANALYSIS]</scope>
</reference>
<name>ARP3_YEAST</name>
<protein>
    <recommendedName>
        <fullName>Actin-related protein 3</fullName>
    </recommendedName>
    <alternativeName>
        <fullName>Actin-like protein ARP3</fullName>
        <shortName>Actin-like protein 3</shortName>
    </alternativeName>
</protein>
<gene>
    <name type="primary">ARP3</name>
    <name type="synonym">ACT4</name>
    <name type="ordered locus">YJR065C</name>
    <name type="ORF">J1760</name>
</gene>
<sequence length="449" mass="49542">MSYLNNPAVVMDNGTGLTKLGFAGNDSPSWVFPTAIATAAPSNTKKSSGVGAPSAVSNEASYFGNSTSATNFNGATGGLLSNNLSGKRGTEDLDFYIGNEALVASQGPSYSLSYPIRHGQVENWDHMERFWENSIFKYLRTEPEDHFFLLTEPPLNPPENREQVAEIFFESFNCAGLYIAVQAVLALAASWTSSKVTDRSLTGTVIDSGDGVTHVIPVAEGYVIGSAIKNIPIAGRDITLFIQSLLRERGEADTSLRTAEKIKQEYCYVCPDIVKEFNKFDKDPSKFAQFVVENQEKTRRKVVDIGYERFLAPEIFFNPEIASSDFLTPLPTVVDQTIQACPIDVRKGLYNNIVLSGGSTMFKDFGRRLQRDLKSIVNNRIAQSELLSGTKSTGVDVSVISHRKQRNAVWFGGSLLAQTAEFKGYCHTKKDYEEYGPEIVRNFSLFNMV</sequence>
<dbReference type="EMBL" id="L37111">
    <property type="protein sequence ID" value="AAC37503.1"/>
    <property type="molecule type" value="Genomic_DNA"/>
</dbReference>
<dbReference type="EMBL" id="L47993">
    <property type="protein sequence ID" value="AAB39291.1"/>
    <property type="molecule type" value="Genomic_DNA"/>
</dbReference>
<dbReference type="EMBL" id="Z49565">
    <property type="protein sequence ID" value="CAA89593.1"/>
    <property type="molecule type" value="Genomic_DNA"/>
</dbReference>
<dbReference type="EMBL" id="BK006943">
    <property type="protein sequence ID" value="DAA08852.1"/>
    <property type="molecule type" value="Genomic_DNA"/>
</dbReference>
<dbReference type="PIR" id="S57084">
    <property type="entry name" value="S57084"/>
</dbReference>
<dbReference type="RefSeq" id="NP_012599.3">
    <property type="nucleotide sequence ID" value="NM_001181723.3"/>
</dbReference>
<dbReference type="SMR" id="P47117"/>
<dbReference type="BioGRID" id="33822">
    <property type="interactions" value="833"/>
</dbReference>
<dbReference type="ComplexPortal" id="CPX-607">
    <property type="entry name" value="Actin-related protein 2/3 complex"/>
</dbReference>
<dbReference type="DIP" id="DIP-2649N"/>
<dbReference type="FunCoup" id="P47117">
    <property type="interactions" value="859"/>
</dbReference>
<dbReference type="IntAct" id="P47117">
    <property type="interactions" value="23"/>
</dbReference>
<dbReference type="MINT" id="P47117"/>
<dbReference type="STRING" id="4932.YJR065C"/>
<dbReference type="iPTMnet" id="P47117"/>
<dbReference type="PaxDb" id="4932-YJR065C"/>
<dbReference type="PeptideAtlas" id="P47117"/>
<dbReference type="TopDownProteomics" id="P47117"/>
<dbReference type="EnsemblFungi" id="YJR065C_mRNA">
    <property type="protein sequence ID" value="YJR065C"/>
    <property type="gene ID" value="YJR065C"/>
</dbReference>
<dbReference type="GeneID" id="853528"/>
<dbReference type="KEGG" id="sce:YJR065C"/>
<dbReference type="AGR" id="SGD:S000003826"/>
<dbReference type="SGD" id="S000003826">
    <property type="gene designation" value="ARP3"/>
</dbReference>
<dbReference type="VEuPathDB" id="FungiDB:YJR065C"/>
<dbReference type="eggNOG" id="KOG0678">
    <property type="taxonomic scope" value="Eukaryota"/>
</dbReference>
<dbReference type="HOGENOM" id="CLU_027965_3_0_1"/>
<dbReference type="InParanoid" id="P47117"/>
<dbReference type="OMA" id="GIHYPIR"/>
<dbReference type="OrthoDB" id="421448at2759"/>
<dbReference type="BioCyc" id="YEAST:G3O-31698-MONOMER"/>
<dbReference type="Reactome" id="R-SCE-2029482">
    <property type="pathway name" value="Regulation of actin dynamics for phagocytic cup formation"/>
</dbReference>
<dbReference type="Reactome" id="R-SCE-5663213">
    <property type="pathway name" value="RHO GTPases Activate WASPs and WAVEs"/>
</dbReference>
<dbReference type="BioGRID-ORCS" id="853528">
    <property type="hits" value="2 hits in 10 CRISPR screens"/>
</dbReference>
<dbReference type="CD-CODE" id="E03F929F">
    <property type="entry name" value="Stress granule"/>
</dbReference>
<dbReference type="PRO" id="PR:P47117"/>
<dbReference type="Proteomes" id="UP000002311">
    <property type="component" value="Chromosome X"/>
</dbReference>
<dbReference type="RNAct" id="P47117">
    <property type="molecule type" value="protein"/>
</dbReference>
<dbReference type="GO" id="GO:0030479">
    <property type="term" value="C:actin cortical patch"/>
    <property type="evidence" value="ECO:0000314"/>
    <property type="project" value="SGD"/>
</dbReference>
<dbReference type="GO" id="GO:0015629">
    <property type="term" value="C:actin cytoskeleton"/>
    <property type="evidence" value="ECO:0000303"/>
    <property type="project" value="ComplexPortal"/>
</dbReference>
<dbReference type="GO" id="GO:0005885">
    <property type="term" value="C:Arp2/3 protein complex"/>
    <property type="evidence" value="ECO:0000314"/>
    <property type="project" value="SGD"/>
</dbReference>
<dbReference type="GO" id="GO:0005886">
    <property type="term" value="C:plasma membrane"/>
    <property type="evidence" value="ECO:0007005"/>
    <property type="project" value="SGD"/>
</dbReference>
<dbReference type="GO" id="GO:0003779">
    <property type="term" value="F:actin binding"/>
    <property type="evidence" value="ECO:0007669"/>
    <property type="project" value="UniProtKB-KW"/>
</dbReference>
<dbReference type="GO" id="GO:0005524">
    <property type="term" value="F:ATP binding"/>
    <property type="evidence" value="ECO:0000314"/>
    <property type="project" value="SGD"/>
</dbReference>
<dbReference type="GO" id="GO:0044396">
    <property type="term" value="P:actin cortical patch organization"/>
    <property type="evidence" value="ECO:0000315"/>
    <property type="project" value="SGD"/>
</dbReference>
<dbReference type="GO" id="GO:0045010">
    <property type="term" value="P:actin nucleation"/>
    <property type="evidence" value="ECO:0000303"/>
    <property type="project" value="ComplexPortal"/>
</dbReference>
<dbReference type="GO" id="GO:0034314">
    <property type="term" value="P:Arp2/3 complex-mediated actin nucleation"/>
    <property type="evidence" value="ECO:0000315"/>
    <property type="project" value="SGD"/>
</dbReference>
<dbReference type="CDD" id="cd10221">
    <property type="entry name" value="ASKHA_NBD_Arp3-like"/>
    <property type="match status" value="1"/>
</dbReference>
<dbReference type="FunFam" id="3.90.640.10:FF:000006">
    <property type="entry name" value="Actin-related protein 3 (ARP3)"/>
    <property type="match status" value="1"/>
</dbReference>
<dbReference type="FunFam" id="3.30.420.40:FF:000058">
    <property type="entry name" value="Putative actin-related protein 5"/>
    <property type="match status" value="1"/>
</dbReference>
<dbReference type="Gene3D" id="3.30.420.40">
    <property type="match status" value="2"/>
</dbReference>
<dbReference type="Gene3D" id="3.90.640.10">
    <property type="entry name" value="Actin, Chain A, domain 4"/>
    <property type="match status" value="1"/>
</dbReference>
<dbReference type="InterPro" id="IPR004000">
    <property type="entry name" value="Actin"/>
</dbReference>
<dbReference type="InterPro" id="IPR020902">
    <property type="entry name" value="Actin/actin-like_CS"/>
</dbReference>
<dbReference type="InterPro" id="IPR043129">
    <property type="entry name" value="ATPase_NBD"/>
</dbReference>
<dbReference type="PANTHER" id="PTHR11937">
    <property type="entry name" value="ACTIN"/>
    <property type="match status" value="1"/>
</dbReference>
<dbReference type="Pfam" id="PF00022">
    <property type="entry name" value="Actin"/>
    <property type="match status" value="2"/>
</dbReference>
<dbReference type="SMART" id="SM00268">
    <property type="entry name" value="ACTIN"/>
    <property type="match status" value="1"/>
</dbReference>
<dbReference type="SUPFAM" id="SSF53067">
    <property type="entry name" value="Actin-like ATPase domain"/>
    <property type="match status" value="2"/>
</dbReference>
<dbReference type="PROSITE" id="PS01132">
    <property type="entry name" value="ACTINS_ACT_LIKE"/>
    <property type="match status" value="1"/>
</dbReference>
<evidence type="ECO:0000250" key="1"/>
<evidence type="ECO:0000269" key="2">
    <source>
    </source>
</evidence>
<evidence type="ECO:0000269" key="3">
    <source>
    </source>
</evidence>
<evidence type="ECO:0000305" key="4"/>
<comment type="function">
    <text evidence="1">Functions as ATP-binding component of the Arp2/3 complex which is involved in regulation of actin polymerization and together with an activating nucleation-promoting factor (NPF) mediates the formation of branched actin networks. Seems to contact the pointed end of the daughter actin filament (By similarity).</text>
</comment>
<comment type="subunit">
    <text evidence="3">Component of the Arp2/3 complex composed of ARP2, ARP3, ARC40/p41-ARC, ARC35/p34-ARC, ARC18/p21-ARC, ARC19/p20-ARC and ARC16/p16-ARC.</text>
</comment>
<comment type="interaction">
    <interactant intactId="EBI-2933">
        <id>P47117</id>
    </interactant>
    <interactant intactId="EBI-2777">
        <id>P38328</id>
        <label>ARC40</label>
    </interactant>
    <organismsDiffer>false</organismsDiffer>
    <experiments>5</experiments>
</comment>
<comment type="subcellular location">
    <subcellularLocation>
        <location evidence="3">Cytoplasm</location>
        <location evidence="3">Cytoskeleton</location>
        <location evidence="3">Actin patch</location>
    </subcellularLocation>
</comment>
<comment type="miscellaneous">
    <text evidence="2">Present with 6650 molecules/cell in log phase SD medium.</text>
</comment>
<comment type="similarity">
    <text evidence="4">Belongs to the actin family. ARP3 subfamily.</text>
</comment>
<accession>P47117</accession>
<accession>D6VWN6</accession>
<feature type="chain" id="PRO_0000089090" description="Actin-related protein 3">
    <location>
        <begin position="1"/>
        <end position="449"/>
    </location>
</feature>
<keyword id="KW-0009">Actin-binding</keyword>
<keyword id="KW-0067">ATP-binding</keyword>
<keyword id="KW-0963">Cytoplasm</keyword>
<keyword id="KW-0206">Cytoskeleton</keyword>
<keyword id="KW-0547">Nucleotide-binding</keyword>
<keyword id="KW-1185">Reference proteome</keyword>
<organism>
    <name type="scientific">Saccharomyces cerevisiae (strain ATCC 204508 / S288c)</name>
    <name type="common">Baker's yeast</name>
    <dbReference type="NCBI Taxonomy" id="559292"/>
    <lineage>
        <taxon>Eukaryota</taxon>
        <taxon>Fungi</taxon>
        <taxon>Dikarya</taxon>
        <taxon>Ascomycota</taxon>
        <taxon>Saccharomycotina</taxon>
        <taxon>Saccharomycetes</taxon>
        <taxon>Saccharomycetales</taxon>
        <taxon>Saccharomycetaceae</taxon>
        <taxon>Saccharomyces</taxon>
    </lineage>
</organism>